<keyword id="KW-0027">Amidation</keyword>
<keyword id="KW-0903">Direct protein sequencing</keyword>
<keyword id="KW-0527">Neuropeptide</keyword>
<keyword id="KW-0964">Secreted</keyword>
<feature type="peptide" id="PRO_0000421649" description="CAPA-Periviscerokinin-2" evidence="3">
    <location>
        <begin position="1"/>
        <end position="19"/>
    </location>
</feature>
<feature type="modified residue" description="Valine amide" evidence="3">
    <location>
        <position position="19"/>
    </location>
</feature>
<reference evidence="5" key="1">
    <citation type="journal article" date="2012" name="Syst. Biol.">
        <title>Peptidomics-based phylogeny and biogeography of Mantophasmatodea (Hexapoda).</title>
        <authorList>
            <person name="Predel R."/>
            <person name="Neupert S."/>
            <person name="Huetteroth W."/>
            <person name="Kahnt J."/>
            <person name="Waidelich D."/>
            <person name="Roth S."/>
        </authorList>
    </citation>
    <scope>PROTEIN SEQUENCE</scope>
    <scope>AMIDATION AT VAL-19</scope>
    <source>
        <tissue evidence="3">Abdominal perisympathetic organs</tissue>
    </source>
</reference>
<protein>
    <recommendedName>
        <fullName evidence="4">CAPA-Periviscerokinin-2</fullName>
        <shortName evidence="4">CAPA-PVK-2</shortName>
    </recommendedName>
</protein>
<dbReference type="GO" id="GO:0005576">
    <property type="term" value="C:extracellular region"/>
    <property type="evidence" value="ECO:0007669"/>
    <property type="project" value="UniProtKB-SubCell"/>
</dbReference>
<dbReference type="GO" id="GO:0007218">
    <property type="term" value="P:neuropeptide signaling pathway"/>
    <property type="evidence" value="ECO:0007669"/>
    <property type="project" value="UniProtKB-KW"/>
</dbReference>
<proteinExistence type="evidence at protein level"/>
<sequence length="19" mass="2048">SGLQFAVLDGQGFLPFPRV</sequence>
<evidence type="ECO:0000250" key="1">
    <source>
        <dbReference type="UniProtKB" id="P83923"/>
    </source>
</evidence>
<evidence type="ECO:0000255" key="2"/>
<evidence type="ECO:0000269" key="3">
    <source>
    </source>
</evidence>
<evidence type="ECO:0000303" key="4">
    <source>
    </source>
</evidence>
<evidence type="ECO:0000305" key="5"/>
<evidence type="ECO:0000305" key="6">
    <source>
    </source>
</evidence>
<name>PVK2_PRAMA</name>
<organism>
    <name type="scientific">Praedatophasma maraisi</name>
    <name type="common">Gladiator</name>
    <name type="synonym">Heel-walker</name>
    <dbReference type="NCBI Taxonomy" id="409170"/>
    <lineage>
        <taxon>Eukaryota</taxon>
        <taxon>Metazoa</taxon>
        <taxon>Ecdysozoa</taxon>
        <taxon>Arthropoda</taxon>
        <taxon>Hexapoda</taxon>
        <taxon>Insecta</taxon>
        <taxon>Pterygota</taxon>
        <taxon>Neoptera</taxon>
        <taxon>Polyneoptera</taxon>
        <taxon>Mantophasmatodea</taxon>
        <taxon>Mantophasmatidae</taxon>
        <taxon>Praedatophasma</taxon>
    </lineage>
</organism>
<accession>B3A0F7</accession>
<comment type="function">
    <text evidence="1">Mediates visceral muscle contractile activity (myotropic activity).</text>
</comment>
<comment type="subcellular location">
    <subcellularLocation>
        <location evidence="6">Secreted</location>
    </subcellularLocation>
</comment>
<comment type="similarity">
    <text evidence="2">Belongs to the periviscerokinin family.</text>
</comment>